<evidence type="ECO:0000255" key="1">
    <source>
        <dbReference type="HAMAP-Rule" id="MF_00300"/>
    </source>
</evidence>
<evidence type="ECO:0000256" key="2">
    <source>
        <dbReference type="SAM" id="MobiDB-lite"/>
    </source>
</evidence>
<dbReference type="EC" id="4.2.3.5" evidence="1"/>
<dbReference type="EMBL" id="CU468135">
    <property type="protein sequence ID" value="CAO96200.1"/>
    <property type="molecule type" value="Genomic_DNA"/>
</dbReference>
<dbReference type="RefSeq" id="WP_012440897.1">
    <property type="nucleotide sequence ID" value="NC_010694.1"/>
</dbReference>
<dbReference type="SMR" id="B2VIY1"/>
<dbReference type="STRING" id="465817.ETA_11540"/>
<dbReference type="KEGG" id="eta:ETA_11540"/>
<dbReference type="eggNOG" id="COG0082">
    <property type="taxonomic scope" value="Bacteria"/>
</dbReference>
<dbReference type="HOGENOM" id="CLU_034547_0_2_6"/>
<dbReference type="OrthoDB" id="9771806at2"/>
<dbReference type="UniPathway" id="UPA00053">
    <property type="reaction ID" value="UER00090"/>
</dbReference>
<dbReference type="Proteomes" id="UP000001726">
    <property type="component" value="Chromosome"/>
</dbReference>
<dbReference type="GO" id="GO:0005829">
    <property type="term" value="C:cytosol"/>
    <property type="evidence" value="ECO:0007669"/>
    <property type="project" value="TreeGrafter"/>
</dbReference>
<dbReference type="GO" id="GO:0004107">
    <property type="term" value="F:chorismate synthase activity"/>
    <property type="evidence" value="ECO:0007669"/>
    <property type="project" value="UniProtKB-UniRule"/>
</dbReference>
<dbReference type="GO" id="GO:0010181">
    <property type="term" value="F:FMN binding"/>
    <property type="evidence" value="ECO:0007669"/>
    <property type="project" value="TreeGrafter"/>
</dbReference>
<dbReference type="GO" id="GO:0008652">
    <property type="term" value="P:amino acid biosynthetic process"/>
    <property type="evidence" value="ECO:0007669"/>
    <property type="project" value="UniProtKB-KW"/>
</dbReference>
<dbReference type="GO" id="GO:0009073">
    <property type="term" value="P:aromatic amino acid family biosynthetic process"/>
    <property type="evidence" value="ECO:0007669"/>
    <property type="project" value="UniProtKB-KW"/>
</dbReference>
<dbReference type="GO" id="GO:0009423">
    <property type="term" value="P:chorismate biosynthetic process"/>
    <property type="evidence" value="ECO:0007669"/>
    <property type="project" value="UniProtKB-UniRule"/>
</dbReference>
<dbReference type="CDD" id="cd07304">
    <property type="entry name" value="Chorismate_synthase"/>
    <property type="match status" value="1"/>
</dbReference>
<dbReference type="FunFam" id="3.60.150.10:FF:000001">
    <property type="entry name" value="Chorismate synthase"/>
    <property type="match status" value="1"/>
</dbReference>
<dbReference type="Gene3D" id="3.60.150.10">
    <property type="entry name" value="Chorismate synthase AroC"/>
    <property type="match status" value="1"/>
</dbReference>
<dbReference type="HAMAP" id="MF_00300">
    <property type="entry name" value="Chorismate_synth"/>
    <property type="match status" value="1"/>
</dbReference>
<dbReference type="InterPro" id="IPR000453">
    <property type="entry name" value="Chorismate_synth"/>
</dbReference>
<dbReference type="InterPro" id="IPR035904">
    <property type="entry name" value="Chorismate_synth_AroC_sf"/>
</dbReference>
<dbReference type="InterPro" id="IPR020541">
    <property type="entry name" value="Chorismate_synthase_CS"/>
</dbReference>
<dbReference type="NCBIfam" id="TIGR00033">
    <property type="entry name" value="aroC"/>
    <property type="match status" value="1"/>
</dbReference>
<dbReference type="NCBIfam" id="NF003793">
    <property type="entry name" value="PRK05382.1"/>
    <property type="match status" value="1"/>
</dbReference>
<dbReference type="PANTHER" id="PTHR21085">
    <property type="entry name" value="CHORISMATE SYNTHASE"/>
    <property type="match status" value="1"/>
</dbReference>
<dbReference type="PANTHER" id="PTHR21085:SF0">
    <property type="entry name" value="CHORISMATE SYNTHASE"/>
    <property type="match status" value="1"/>
</dbReference>
<dbReference type="Pfam" id="PF01264">
    <property type="entry name" value="Chorismate_synt"/>
    <property type="match status" value="1"/>
</dbReference>
<dbReference type="PIRSF" id="PIRSF001456">
    <property type="entry name" value="Chorismate_synth"/>
    <property type="match status" value="1"/>
</dbReference>
<dbReference type="SUPFAM" id="SSF103263">
    <property type="entry name" value="Chorismate synthase, AroC"/>
    <property type="match status" value="1"/>
</dbReference>
<dbReference type="PROSITE" id="PS00787">
    <property type="entry name" value="CHORISMATE_SYNTHASE_1"/>
    <property type="match status" value="1"/>
</dbReference>
<dbReference type="PROSITE" id="PS00788">
    <property type="entry name" value="CHORISMATE_SYNTHASE_2"/>
    <property type="match status" value="1"/>
</dbReference>
<dbReference type="PROSITE" id="PS00789">
    <property type="entry name" value="CHORISMATE_SYNTHASE_3"/>
    <property type="match status" value="1"/>
</dbReference>
<comment type="function">
    <text evidence="1">Catalyzes the anti-1,4-elimination of the C-3 phosphate and the C-6 proR hydrogen from 5-enolpyruvylshikimate-3-phosphate (EPSP) to yield chorismate, which is the branch point compound that serves as the starting substrate for the three terminal pathways of aromatic amino acid biosynthesis. This reaction introduces a second double bond into the aromatic ring system.</text>
</comment>
<comment type="catalytic activity">
    <reaction evidence="1">
        <text>5-O-(1-carboxyvinyl)-3-phosphoshikimate = chorismate + phosphate</text>
        <dbReference type="Rhea" id="RHEA:21020"/>
        <dbReference type="ChEBI" id="CHEBI:29748"/>
        <dbReference type="ChEBI" id="CHEBI:43474"/>
        <dbReference type="ChEBI" id="CHEBI:57701"/>
        <dbReference type="EC" id="4.2.3.5"/>
    </reaction>
</comment>
<comment type="cofactor">
    <cofactor evidence="1">
        <name>FMNH2</name>
        <dbReference type="ChEBI" id="CHEBI:57618"/>
    </cofactor>
    <text evidence="1">Reduced FMN (FMNH(2)).</text>
</comment>
<comment type="pathway">
    <text evidence="1">Metabolic intermediate biosynthesis; chorismate biosynthesis; chorismate from D-erythrose 4-phosphate and phosphoenolpyruvate: step 7/7.</text>
</comment>
<comment type="subunit">
    <text evidence="1">Homotetramer.</text>
</comment>
<comment type="similarity">
    <text evidence="1">Belongs to the chorismate synthase family.</text>
</comment>
<feature type="chain" id="PRO_1000115351" description="Chorismate synthase">
    <location>
        <begin position="1"/>
        <end position="361"/>
    </location>
</feature>
<feature type="region of interest" description="Disordered" evidence="2">
    <location>
        <begin position="37"/>
        <end position="59"/>
    </location>
</feature>
<feature type="compositionally biased region" description="Basic and acidic residues" evidence="2">
    <location>
        <begin position="40"/>
        <end position="49"/>
    </location>
</feature>
<feature type="binding site" evidence="1">
    <location>
        <position position="48"/>
    </location>
    <ligand>
        <name>NADP(+)</name>
        <dbReference type="ChEBI" id="CHEBI:58349"/>
    </ligand>
</feature>
<feature type="binding site" evidence="1">
    <location>
        <position position="54"/>
    </location>
    <ligand>
        <name>NADP(+)</name>
        <dbReference type="ChEBI" id="CHEBI:58349"/>
    </ligand>
</feature>
<feature type="binding site" evidence="1">
    <location>
        <begin position="125"/>
        <end position="127"/>
    </location>
    <ligand>
        <name>FMN</name>
        <dbReference type="ChEBI" id="CHEBI:58210"/>
    </ligand>
</feature>
<feature type="binding site" evidence="1">
    <location>
        <begin position="238"/>
        <end position="239"/>
    </location>
    <ligand>
        <name>FMN</name>
        <dbReference type="ChEBI" id="CHEBI:58210"/>
    </ligand>
</feature>
<feature type="binding site" evidence="1">
    <location>
        <position position="278"/>
    </location>
    <ligand>
        <name>FMN</name>
        <dbReference type="ChEBI" id="CHEBI:58210"/>
    </ligand>
</feature>
<feature type="binding site" evidence="1">
    <location>
        <begin position="293"/>
        <end position="297"/>
    </location>
    <ligand>
        <name>FMN</name>
        <dbReference type="ChEBI" id="CHEBI:58210"/>
    </ligand>
</feature>
<feature type="binding site" evidence="1">
    <location>
        <position position="319"/>
    </location>
    <ligand>
        <name>FMN</name>
        <dbReference type="ChEBI" id="CHEBI:58210"/>
    </ligand>
</feature>
<organism>
    <name type="scientific">Erwinia tasmaniensis (strain DSM 17950 / CFBP 7177 / CIP 109463 / NCPPB 4357 / Et1/99)</name>
    <dbReference type="NCBI Taxonomy" id="465817"/>
    <lineage>
        <taxon>Bacteria</taxon>
        <taxon>Pseudomonadati</taxon>
        <taxon>Pseudomonadota</taxon>
        <taxon>Gammaproteobacteria</taxon>
        <taxon>Enterobacterales</taxon>
        <taxon>Erwiniaceae</taxon>
        <taxon>Erwinia</taxon>
    </lineage>
</organism>
<name>AROC_ERWT9</name>
<keyword id="KW-0028">Amino-acid biosynthesis</keyword>
<keyword id="KW-0057">Aromatic amino acid biosynthesis</keyword>
<keyword id="KW-0274">FAD</keyword>
<keyword id="KW-0285">Flavoprotein</keyword>
<keyword id="KW-0288">FMN</keyword>
<keyword id="KW-0456">Lyase</keyword>
<keyword id="KW-0521">NADP</keyword>
<keyword id="KW-1185">Reference proteome</keyword>
<proteinExistence type="inferred from homology"/>
<accession>B2VIY1</accession>
<protein>
    <recommendedName>
        <fullName evidence="1">Chorismate synthase</fullName>
        <shortName evidence="1">CS</shortName>
        <ecNumber evidence="1">4.2.3.5</ecNumber>
    </recommendedName>
    <alternativeName>
        <fullName evidence="1">5-enolpyruvylshikimate-3-phosphate phospholyase</fullName>
    </alternativeName>
</protein>
<gene>
    <name evidence="1" type="primary">aroC</name>
    <name type="ordered locus">ETA_11540</name>
</gene>
<sequence>MAGNTIGQLFRVTTFGESHGIALGCIVDGVPPGIPLTEEDLQHDLDRRRPGTSRYTTPRREPDRVKILSGVFEGRTTGTSIGLLIENTDQRSQDYGAIKELYRPGHADFTYDGKYGFRDYRGGGRSSARETAMRVAAGAIAKKYLDMKHGIKVRGYLAQMGDVVCELKDWQQVEQNPFFSPDVDKLDALDELMRALKKEGDSIGAKVAVMAENVPVGLGEPVFDRLDADLAHALMSINAVKGVEIGDGFAVVNQRGSEHRDEIRANGFQSNHAGGILGGISSGQTITANLAMKPTSSITVPGKTITRSGEEVEMITKGRHDPCVGIRAVPIAEAMMAIVLMDHLLRHRAQNADVHVDMPHG</sequence>
<reference key="1">
    <citation type="journal article" date="2008" name="Environ. Microbiol.">
        <title>The genome of Erwinia tasmaniensis strain Et1/99, a non-pathogenic bacterium in the genus Erwinia.</title>
        <authorList>
            <person name="Kube M."/>
            <person name="Migdoll A.M."/>
            <person name="Mueller I."/>
            <person name="Kuhl H."/>
            <person name="Beck A."/>
            <person name="Reinhardt R."/>
            <person name="Geider K."/>
        </authorList>
    </citation>
    <scope>NUCLEOTIDE SEQUENCE [LARGE SCALE GENOMIC DNA]</scope>
    <source>
        <strain>DSM 17950 / CFBP 7177 / CIP 109463 / NCPPB 4357 / Et1/99</strain>
    </source>
</reference>